<organism>
    <name type="scientific">Prochlorococcus marinus (strain SARG / CCMP1375 / SS120)</name>
    <dbReference type="NCBI Taxonomy" id="167539"/>
    <lineage>
        <taxon>Bacteria</taxon>
        <taxon>Bacillati</taxon>
        <taxon>Cyanobacteriota</taxon>
        <taxon>Cyanophyceae</taxon>
        <taxon>Synechococcales</taxon>
        <taxon>Prochlorococcaceae</taxon>
        <taxon>Prochlorococcus</taxon>
    </lineage>
</organism>
<protein>
    <recommendedName>
        <fullName evidence="1">Elongation factor G</fullName>
        <shortName evidence="1">EF-G</shortName>
    </recommendedName>
</protein>
<dbReference type="EMBL" id="AE017126">
    <property type="protein sequence ID" value="AAQ00709.1"/>
    <property type="molecule type" value="Genomic_DNA"/>
</dbReference>
<dbReference type="RefSeq" id="NP_876056.1">
    <property type="nucleotide sequence ID" value="NC_005042.1"/>
</dbReference>
<dbReference type="RefSeq" id="WP_011125814.1">
    <property type="nucleotide sequence ID" value="NC_005042.1"/>
</dbReference>
<dbReference type="SMR" id="Q7VA04"/>
<dbReference type="STRING" id="167539.Pro_1665"/>
<dbReference type="EnsemblBacteria" id="AAQ00709">
    <property type="protein sequence ID" value="AAQ00709"/>
    <property type="gene ID" value="Pro_1665"/>
</dbReference>
<dbReference type="KEGG" id="pma:Pro_1665"/>
<dbReference type="PATRIC" id="fig|167539.5.peg.1759"/>
<dbReference type="eggNOG" id="COG0480">
    <property type="taxonomic scope" value="Bacteria"/>
</dbReference>
<dbReference type="HOGENOM" id="CLU_002794_4_1_3"/>
<dbReference type="OrthoDB" id="580826at2"/>
<dbReference type="Proteomes" id="UP000001420">
    <property type="component" value="Chromosome"/>
</dbReference>
<dbReference type="GO" id="GO:0005737">
    <property type="term" value="C:cytoplasm"/>
    <property type="evidence" value="ECO:0007669"/>
    <property type="project" value="UniProtKB-SubCell"/>
</dbReference>
<dbReference type="GO" id="GO:0005525">
    <property type="term" value="F:GTP binding"/>
    <property type="evidence" value="ECO:0007669"/>
    <property type="project" value="UniProtKB-UniRule"/>
</dbReference>
<dbReference type="GO" id="GO:0003924">
    <property type="term" value="F:GTPase activity"/>
    <property type="evidence" value="ECO:0007669"/>
    <property type="project" value="InterPro"/>
</dbReference>
<dbReference type="GO" id="GO:0003746">
    <property type="term" value="F:translation elongation factor activity"/>
    <property type="evidence" value="ECO:0007669"/>
    <property type="project" value="UniProtKB-UniRule"/>
</dbReference>
<dbReference type="GO" id="GO:0032790">
    <property type="term" value="P:ribosome disassembly"/>
    <property type="evidence" value="ECO:0007669"/>
    <property type="project" value="TreeGrafter"/>
</dbReference>
<dbReference type="CDD" id="cd01886">
    <property type="entry name" value="EF-G"/>
    <property type="match status" value="1"/>
</dbReference>
<dbReference type="CDD" id="cd16262">
    <property type="entry name" value="EFG_III"/>
    <property type="match status" value="1"/>
</dbReference>
<dbReference type="CDD" id="cd01434">
    <property type="entry name" value="EFG_mtEFG1_IV"/>
    <property type="match status" value="1"/>
</dbReference>
<dbReference type="CDD" id="cd03713">
    <property type="entry name" value="EFG_mtEFG_C"/>
    <property type="match status" value="1"/>
</dbReference>
<dbReference type="CDD" id="cd04088">
    <property type="entry name" value="EFG_mtEFG_II"/>
    <property type="match status" value="1"/>
</dbReference>
<dbReference type="FunFam" id="2.40.30.10:FF:000006">
    <property type="entry name" value="Elongation factor G"/>
    <property type="match status" value="1"/>
</dbReference>
<dbReference type="FunFam" id="3.30.230.10:FF:000003">
    <property type="entry name" value="Elongation factor G"/>
    <property type="match status" value="1"/>
</dbReference>
<dbReference type="FunFam" id="3.30.70.240:FF:000001">
    <property type="entry name" value="Elongation factor G"/>
    <property type="match status" value="1"/>
</dbReference>
<dbReference type="FunFam" id="3.30.70.870:FF:000001">
    <property type="entry name" value="Elongation factor G"/>
    <property type="match status" value="1"/>
</dbReference>
<dbReference type="FunFam" id="3.40.50.300:FF:000029">
    <property type="entry name" value="Elongation factor G"/>
    <property type="match status" value="1"/>
</dbReference>
<dbReference type="Gene3D" id="3.30.230.10">
    <property type="match status" value="1"/>
</dbReference>
<dbReference type="Gene3D" id="3.30.70.240">
    <property type="match status" value="1"/>
</dbReference>
<dbReference type="Gene3D" id="3.30.70.870">
    <property type="entry name" value="Elongation Factor G (Translational Gtpase), domain 3"/>
    <property type="match status" value="1"/>
</dbReference>
<dbReference type="Gene3D" id="3.40.50.300">
    <property type="entry name" value="P-loop containing nucleotide triphosphate hydrolases"/>
    <property type="match status" value="1"/>
</dbReference>
<dbReference type="Gene3D" id="2.40.30.10">
    <property type="entry name" value="Translation factors"/>
    <property type="match status" value="1"/>
</dbReference>
<dbReference type="HAMAP" id="MF_00054_B">
    <property type="entry name" value="EF_G_EF_2_B"/>
    <property type="match status" value="1"/>
</dbReference>
<dbReference type="InterPro" id="IPR041095">
    <property type="entry name" value="EFG_II"/>
</dbReference>
<dbReference type="InterPro" id="IPR009022">
    <property type="entry name" value="EFG_III"/>
</dbReference>
<dbReference type="InterPro" id="IPR035647">
    <property type="entry name" value="EFG_III/V"/>
</dbReference>
<dbReference type="InterPro" id="IPR047872">
    <property type="entry name" value="EFG_IV"/>
</dbReference>
<dbReference type="InterPro" id="IPR035649">
    <property type="entry name" value="EFG_V"/>
</dbReference>
<dbReference type="InterPro" id="IPR000640">
    <property type="entry name" value="EFG_V-like"/>
</dbReference>
<dbReference type="InterPro" id="IPR004161">
    <property type="entry name" value="EFTu-like_2"/>
</dbReference>
<dbReference type="InterPro" id="IPR031157">
    <property type="entry name" value="G_TR_CS"/>
</dbReference>
<dbReference type="InterPro" id="IPR027417">
    <property type="entry name" value="P-loop_NTPase"/>
</dbReference>
<dbReference type="InterPro" id="IPR020568">
    <property type="entry name" value="Ribosomal_Su5_D2-typ_SF"/>
</dbReference>
<dbReference type="InterPro" id="IPR014721">
    <property type="entry name" value="Ribsml_uS5_D2-typ_fold_subgr"/>
</dbReference>
<dbReference type="InterPro" id="IPR005225">
    <property type="entry name" value="Small_GTP-bd"/>
</dbReference>
<dbReference type="InterPro" id="IPR000795">
    <property type="entry name" value="T_Tr_GTP-bd_dom"/>
</dbReference>
<dbReference type="InterPro" id="IPR009000">
    <property type="entry name" value="Transl_B-barrel_sf"/>
</dbReference>
<dbReference type="InterPro" id="IPR004540">
    <property type="entry name" value="Transl_elong_EFG/EF2"/>
</dbReference>
<dbReference type="InterPro" id="IPR005517">
    <property type="entry name" value="Transl_elong_EFG/EF2_IV"/>
</dbReference>
<dbReference type="NCBIfam" id="TIGR00484">
    <property type="entry name" value="EF-G"/>
    <property type="match status" value="1"/>
</dbReference>
<dbReference type="NCBIfam" id="NF009379">
    <property type="entry name" value="PRK12740.1-3"/>
    <property type="match status" value="1"/>
</dbReference>
<dbReference type="NCBIfam" id="NF009381">
    <property type="entry name" value="PRK12740.1-5"/>
    <property type="match status" value="1"/>
</dbReference>
<dbReference type="NCBIfam" id="TIGR00231">
    <property type="entry name" value="small_GTP"/>
    <property type="match status" value="1"/>
</dbReference>
<dbReference type="PANTHER" id="PTHR43261:SF1">
    <property type="entry name" value="RIBOSOME-RELEASING FACTOR 2, MITOCHONDRIAL"/>
    <property type="match status" value="1"/>
</dbReference>
<dbReference type="PANTHER" id="PTHR43261">
    <property type="entry name" value="TRANSLATION ELONGATION FACTOR G-RELATED"/>
    <property type="match status" value="1"/>
</dbReference>
<dbReference type="Pfam" id="PF00679">
    <property type="entry name" value="EFG_C"/>
    <property type="match status" value="1"/>
</dbReference>
<dbReference type="Pfam" id="PF14492">
    <property type="entry name" value="EFG_III"/>
    <property type="match status" value="1"/>
</dbReference>
<dbReference type="Pfam" id="PF03764">
    <property type="entry name" value="EFG_IV"/>
    <property type="match status" value="1"/>
</dbReference>
<dbReference type="Pfam" id="PF00009">
    <property type="entry name" value="GTP_EFTU"/>
    <property type="match status" value="1"/>
</dbReference>
<dbReference type="Pfam" id="PF03144">
    <property type="entry name" value="GTP_EFTU_D2"/>
    <property type="match status" value="1"/>
</dbReference>
<dbReference type="PRINTS" id="PR00315">
    <property type="entry name" value="ELONGATNFCT"/>
</dbReference>
<dbReference type="SMART" id="SM00838">
    <property type="entry name" value="EFG_C"/>
    <property type="match status" value="1"/>
</dbReference>
<dbReference type="SMART" id="SM00889">
    <property type="entry name" value="EFG_IV"/>
    <property type="match status" value="1"/>
</dbReference>
<dbReference type="SUPFAM" id="SSF54980">
    <property type="entry name" value="EF-G C-terminal domain-like"/>
    <property type="match status" value="2"/>
</dbReference>
<dbReference type="SUPFAM" id="SSF52540">
    <property type="entry name" value="P-loop containing nucleoside triphosphate hydrolases"/>
    <property type="match status" value="1"/>
</dbReference>
<dbReference type="SUPFAM" id="SSF54211">
    <property type="entry name" value="Ribosomal protein S5 domain 2-like"/>
    <property type="match status" value="1"/>
</dbReference>
<dbReference type="SUPFAM" id="SSF50447">
    <property type="entry name" value="Translation proteins"/>
    <property type="match status" value="1"/>
</dbReference>
<dbReference type="PROSITE" id="PS00301">
    <property type="entry name" value="G_TR_1"/>
    <property type="match status" value="1"/>
</dbReference>
<dbReference type="PROSITE" id="PS51722">
    <property type="entry name" value="G_TR_2"/>
    <property type="match status" value="1"/>
</dbReference>
<comment type="function">
    <text evidence="1">Catalyzes the GTP-dependent ribosomal translocation step during translation elongation. During this step, the ribosome changes from the pre-translocational (PRE) to the post-translocational (POST) state as the newly formed A-site-bound peptidyl-tRNA and P-site-bound deacylated tRNA move to the P and E sites, respectively. Catalyzes the coordinated movement of the two tRNA molecules, the mRNA and conformational changes in the ribosome.</text>
</comment>
<comment type="subcellular location">
    <subcellularLocation>
        <location evidence="1">Cytoplasm</location>
    </subcellularLocation>
</comment>
<comment type="similarity">
    <text evidence="1">Belongs to the TRAFAC class translation factor GTPase superfamily. Classic translation factor GTPase family. EF-G/EF-2 subfamily.</text>
</comment>
<feature type="chain" id="PRO_0000091181" description="Elongation factor G">
    <location>
        <begin position="1"/>
        <end position="691"/>
    </location>
</feature>
<feature type="domain" description="tr-type G">
    <location>
        <begin position="8"/>
        <end position="282"/>
    </location>
</feature>
<feature type="binding site" evidence="1">
    <location>
        <begin position="17"/>
        <end position="24"/>
    </location>
    <ligand>
        <name>GTP</name>
        <dbReference type="ChEBI" id="CHEBI:37565"/>
    </ligand>
</feature>
<feature type="binding site" evidence="1">
    <location>
        <begin position="81"/>
        <end position="85"/>
    </location>
    <ligand>
        <name>GTP</name>
        <dbReference type="ChEBI" id="CHEBI:37565"/>
    </ligand>
</feature>
<feature type="binding site" evidence="1">
    <location>
        <begin position="135"/>
        <end position="138"/>
    </location>
    <ligand>
        <name>GTP</name>
        <dbReference type="ChEBI" id="CHEBI:37565"/>
    </ligand>
</feature>
<keyword id="KW-0963">Cytoplasm</keyword>
<keyword id="KW-0251">Elongation factor</keyword>
<keyword id="KW-0342">GTP-binding</keyword>
<keyword id="KW-0547">Nucleotide-binding</keyword>
<keyword id="KW-0648">Protein biosynthesis</keyword>
<keyword id="KW-1185">Reference proteome</keyword>
<accession>Q7VA04</accession>
<gene>
    <name evidence="1" type="primary">fusA</name>
    <name type="ordered locus">Pro_1665</name>
</gene>
<name>EFG_PROMA</name>
<evidence type="ECO:0000255" key="1">
    <source>
        <dbReference type="HAMAP-Rule" id="MF_00054"/>
    </source>
</evidence>
<sequence>MARAFPLERVRNIGIAAHIDAGKTTTTERILFYSGVVHKIGEVHDGAAVTDWMAQERERGITITAAAISTSWQEHRINIIDTPGHVDFTIEVERSMRVLDGVIAVFCAVGGVQPQSETVWRQADRYSVPRMVFVNKMDRTGADFLKVYDQIKDRLKANAAPIQLPIGAEGDLSGIIDLVSNKAHIYKNDLGTDIEETEIPSDMAEKAAEWRSKLMETVAETDEELIESFLENGELTIDQLKKGIREGVLKHGLVPMLCGSAFKNKGVQLVLDAVIDYLPAPIDVPPIQGVLPSGKDDVRPSEDNAPFSALAFKVMADPYGKLTFVRMYSGVLEKGSYVLNSTKDAKERISRLVVLKADDREEVDQLRAGDLGAVLGLKNTTTGDTLCSTDDPIVLETLFVPEPVISVAVEPKTKGDMEKLSKALVSLAEEDPTFRVSTDQETNQTVIAGMGELHLEILVDRMLREFKVEANIGAPQVSYRETIRSSSKGEGKYARQTGGKGQYGHVVIEMEPGEPGSGFEFINKIVGGVVPKEYIGPASNGMKETCESGVLAGYPLIDVKVTMVDGSFHDVDSSEMAFKIAGSMAFKDGVKKCNPVLLEPMMKVEVEVPEDFLGSIIGDLSSRRGQVEGQSIDDGISKVQSKVPLAEMFGYATQLRSMTQGRGIFSMEFSKYEEVPRNVAEAIISKNQGNS</sequence>
<reference key="1">
    <citation type="journal article" date="2003" name="Proc. Natl. Acad. Sci. U.S.A.">
        <title>Genome sequence of the cyanobacterium Prochlorococcus marinus SS120, a nearly minimal oxyphototrophic genome.</title>
        <authorList>
            <person name="Dufresne A."/>
            <person name="Salanoubat M."/>
            <person name="Partensky F."/>
            <person name="Artiguenave F."/>
            <person name="Axmann I.M."/>
            <person name="Barbe V."/>
            <person name="Duprat S."/>
            <person name="Galperin M.Y."/>
            <person name="Koonin E.V."/>
            <person name="Le Gall F."/>
            <person name="Makarova K.S."/>
            <person name="Ostrowski M."/>
            <person name="Oztas S."/>
            <person name="Robert C."/>
            <person name="Rogozin I.B."/>
            <person name="Scanlan D.J."/>
            <person name="Tandeau de Marsac N."/>
            <person name="Weissenbach J."/>
            <person name="Wincker P."/>
            <person name="Wolf Y.I."/>
            <person name="Hess W.R."/>
        </authorList>
    </citation>
    <scope>NUCLEOTIDE SEQUENCE [LARGE SCALE GENOMIC DNA]</scope>
    <source>
        <strain>SARG / CCMP1375 / SS120</strain>
    </source>
</reference>
<proteinExistence type="inferred from homology"/>